<proteinExistence type="inferred from homology"/>
<evidence type="ECO:0000255" key="1">
    <source>
        <dbReference type="HAMAP-Rule" id="MF_01633"/>
    </source>
</evidence>
<comment type="function">
    <text evidence="1">Catalyzes the ATP-dependent conversion of 7-carboxy-7-deazaguanine (CDG) to 7-cyano-7-deazaguanine (preQ(0)).</text>
</comment>
<comment type="catalytic activity">
    <reaction evidence="1">
        <text>7-carboxy-7-deazaguanine + NH4(+) + ATP = 7-cyano-7-deazaguanine + ADP + phosphate + H2O + H(+)</text>
        <dbReference type="Rhea" id="RHEA:27982"/>
        <dbReference type="ChEBI" id="CHEBI:15377"/>
        <dbReference type="ChEBI" id="CHEBI:15378"/>
        <dbReference type="ChEBI" id="CHEBI:28938"/>
        <dbReference type="ChEBI" id="CHEBI:30616"/>
        <dbReference type="ChEBI" id="CHEBI:43474"/>
        <dbReference type="ChEBI" id="CHEBI:45075"/>
        <dbReference type="ChEBI" id="CHEBI:61036"/>
        <dbReference type="ChEBI" id="CHEBI:456216"/>
        <dbReference type="EC" id="6.3.4.20"/>
    </reaction>
</comment>
<comment type="cofactor">
    <cofactor evidence="1">
        <name>Zn(2+)</name>
        <dbReference type="ChEBI" id="CHEBI:29105"/>
    </cofactor>
    <text evidence="1">Binds 1 zinc ion per subunit.</text>
</comment>
<comment type="pathway">
    <text evidence="1">Purine metabolism; 7-cyano-7-deazaguanine biosynthesis.</text>
</comment>
<comment type="similarity">
    <text evidence="1">Belongs to the QueC family.</text>
</comment>
<reference key="1">
    <citation type="journal article" date="2005" name="Arch. Microbiol.">
        <title>The genome sequence of an anaerobic aromatic-degrading denitrifying bacterium, strain EbN1.</title>
        <authorList>
            <person name="Rabus R."/>
            <person name="Kube M."/>
            <person name="Heider J."/>
            <person name="Beck A."/>
            <person name="Heitmann K."/>
            <person name="Widdel F."/>
            <person name="Reinhardt R."/>
        </authorList>
    </citation>
    <scope>NUCLEOTIDE SEQUENCE [LARGE SCALE GENOMIC DNA]</scope>
    <source>
        <strain>DSM 19018 / LMG 30748 / EbN1</strain>
    </source>
</reference>
<gene>
    <name evidence="1" type="primary">queC</name>
    <name type="ordered locus">AZOSEA14950</name>
    <name type="ORF">ebA2659</name>
</gene>
<protein>
    <recommendedName>
        <fullName evidence="1">7-cyano-7-deazaguanine synthase</fullName>
        <ecNumber evidence="1">6.3.4.20</ecNumber>
    </recommendedName>
    <alternativeName>
        <fullName evidence="1">7-cyano-7-carbaguanine synthase</fullName>
    </alternativeName>
    <alternativeName>
        <fullName evidence="1">PreQ(0) synthase</fullName>
    </alternativeName>
    <alternativeName>
        <fullName evidence="1">Queuosine biosynthesis protein QueC</fullName>
    </alternativeName>
</protein>
<accession>Q5P4Z2</accession>
<sequence length="226" mass="23663">MTEPKRAIVLLSGGLDSATCLAIARNAGFDCYALSIAYGQRHTAELAAARRVAQSLDAREHRLAHVSLGEFGGSALTDSSIPVPIEGAVGGIPVTYVPARNTVMLSIALAWAEVLGAHDIYVGVNAVDYSGYPDCRPEFIAAFEAMANLATKAGIEGARITIHAPLIRLSKAGIIQRGTALGVDYAQTVSCYQADEAGRACGVCDACRLRKAGFEAAGIPDPTPYR</sequence>
<dbReference type="EC" id="6.3.4.20" evidence="1"/>
<dbReference type="EMBL" id="CR555306">
    <property type="protein sequence ID" value="CAI07620.1"/>
    <property type="molecule type" value="Genomic_DNA"/>
</dbReference>
<dbReference type="RefSeq" id="WP_011237338.1">
    <property type="nucleotide sequence ID" value="NC_006513.1"/>
</dbReference>
<dbReference type="SMR" id="Q5P4Z2"/>
<dbReference type="STRING" id="76114.ebA2659"/>
<dbReference type="KEGG" id="eba:ebA2659"/>
<dbReference type="eggNOG" id="COG0603">
    <property type="taxonomic scope" value="Bacteria"/>
</dbReference>
<dbReference type="HOGENOM" id="CLU_081854_1_1_4"/>
<dbReference type="OrthoDB" id="9789567at2"/>
<dbReference type="UniPathway" id="UPA00391"/>
<dbReference type="Proteomes" id="UP000006552">
    <property type="component" value="Chromosome"/>
</dbReference>
<dbReference type="GO" id="GO:0005524">
    <property type="term" value="F:ATP binding"/>
    <property type="evidence" value="ECO:0007669"/>
    <property type="project" value="UniProtKB-UniRule"/>
</dbReference>
<dbReference type="GO" id="GO:0016879">
    <property type="term" value="F:ligase activity, forming carbon-nitrogen bonds"/>
    <property type="evidence" value="ECO:0007669"/>
    <property type="project" value="UniProtKB-UniRule"/>
</dbReference>
<dbReference type="GO" id="GO:0008270">
    <property type="term" value="F:zinc ion binding"/>
    <property type="evidence" value="ECO:0007669"/>
    <property type="project" value="UniProtKB-UniRule"/>
</dbReference>
<dbReference type="GO" id="GO:0008616">
    <property type="term" value="P:queuosine biosynthetic process"/>
    <property type="evidence" value="ECO:0007669"/>
    <property type="project" value="UniProtKB-UniRule"/>
</dbReference>
<dbReference type="CDD" id="cd01995">
    <property type="entry name" value="QueC-like"/>
    <property type="match status" value="1"/>
</dbReference>
<dbReference type="Gene3D" id="3.40.50.620">
    <property type="entry name" value="HUPs"/>
    <property type="match status" value="1"/>
</dbReference>
<dbReference type="HAMAP" id="MF_01633">
    <property type="entry name" value="QueC"/>
    <property type="match status" value="1"/>
</dbReference>
<dbReference type="InterPro" id="IPR018317">
    <property type="entry name" value="QueC"/>
</dbReference>
<dbReference type="InterPro" id="IPR014729">
    <property type="entry name" value="Rossmann-like_a/b/a_fold"/>
</dbReference>
<dbReference type="NCBIfam" id="TIGR00364">
    <property type="entry name" value="7-cyano-7-deazaguanine synthase QueC"/>
    <property type="match status" value="1"/>
</dbReference>
<dbReference type="PANTHER" id="PTHR42914">
    <property type="entry name" value="7-CYANO-7-DEAZAGUANINE SYNTHASE"/>
    <property type="match status" value="1"/>
</dbReference>
<dbReference type="PANTHER" id="PTHR42914:SF1">
    <property type="entry name" value="7-CYANO-7-DEAZAGUANINE SYNTHASE"/>
    <property type="match status" value="1"/>
</dbReference>
<dbReference type="Pfam" id="PF06508">
    <property type="entry name" value="QueC"/>
    <property type="match status" value="1"/>
</dbReference>
<dbReference type="PIRSF" id="PIRSF006293">
    <property type="entry name" value="ExsB"/>
    <property type="match status" value="1"/>
</dbReference>
<dbReference type="SUPFAM" id="SSF52402">
    <property type="entry name" value="Adenine nucleotide alpha hydrolases-like"/>
    <property type="match status" value="1"/>
</dbReference>
<organism>
    <name type="scientific">Aromatoleum aromaticum (strain DSM 19018 / LMG 30748 / EbN1)</name>
    <name type="common">Azoarcus sp. (strain EbN1)</name>
    <dbReference type="NCBI Taxonomy" id="76114"/>
    <lineage>
        <taxon>Bacteria</taxon>
        <taxon>Pseudomonadati</taxon>
        <taxon>Pseudomonadota</taxon>
        <taxon>Betaproteobacteria</taxon>
        <taxon>Rhodocyclales</taxon>
        <taxon>Rhodocyclaceae</taxon>
        <taxon>Aromatoleum</taxon>
    </lineage>
</organism>
<feature type="chain" id="PRO_0000246793" description="7-cyano-7-deazaguanine synthase">
    <location>
        <begin position="1"/>
        <end position="226"/>
    </location>
</feature>
<feature type="binding site" evidence="1">
    <location>
        <begin position="11"/>
        <end position="21"/>
    </location>
    <ligand>
        <name>ATP</name>
        <dbReference type="ChEBI" id="CHEBI:30616"/>
    </ligand>
</feature>
<feature type="binding site" evidence="1">
    <location>
        <position position="191"/>
    </location>
    <ligand>
        <name>Zn(2+)</name>
        <dbReference type="ChEBI" id="CHEBI:29105"/>
    </ligand>
</feature>
<feature type="binding site" evidence="1">
    <location>
        <position position="201"/>
    </location>
    <ligand>
        <name>Zn(2+)</name>
        <dbReference type="ChEBI" id="CHEBI:29105"/>
    </ligand>
</feature>
<feature type="binding site" evidence="1">
    <location>
        <position position="204"/>
    </location>
    <ligand>
        <name>Zn(2+)</name>
        <dbReference type="ChEBI" id="CHEBI:29105"/>
    </ligand>
</feature>
<feature type="binding site" evidence="1">
    <location>
        <position position="207"/>
    </location>
    <ligand>
        <name>Zn(2+)</name>
        <dbReference type="ChEBI" id="CHEBI:29105"/>
    </ligand>
</feature>
<name>QUEC_AROAE</name>
<keyword id="KW-0067">ATP-binding</keyword>
<keyword id="KW-0436">Ligase</keyword>
<keyword id="KW-0479">Metal-binding</keyword>
<keyword id="KW-0547">Nucleotide-binding</keyword>
<keyword id="KW-0671">Queuosine biosynthesis</keyword>
<keyword id="KW-1185">Reference proteome</keyword>
<keyword id="KW-0862">Zinc</keyword>